<comment type="function">
    <text evidence="1">DNA-dependent RNA polymerase catalyzes the transcription of DNA into RNA using the four ribonucleoside triphosphates as substrates.</text>
</comment>
<comment type="catalytic activity">
    <reaction evidence="1">
        <text>RNA(n) + a ribonucleoside 5'-triphosphate = RNA(n+1) + diphosphate</text>
        <dbReference type="Rhea" id="RHEA:21248"/>
        <dbReference type="Rhea" id="RHEA-COMP:14527"/>
        <dbReference type="Rhea" id="RHEA-COMP:17342"/>
        <dbReference type="ChEBI" id="CHEBI:33019"/>
        <dbReference type="ChEBI" id="CHEBI:61557"/>
        <dbReference type="ChEBI" id="CHEBI:140395"/>
        <dbReference type="EC" id="2.7.7.6"/>
    </reaction>
</comment>
<comment type="subunit">
    <text evidence="1">Homodimer. The RNAP catalytic core consists of 2 alpha, 1 beta, 1 beta' and 1 omega subunit. When a sigma factor is associated with the core the holoenzyme is formed, which can initiate transcription.</text>
</comment>
<comment type="domain">
    <text evidence="1">The N-terminal domain is essential for RNAP assembly and basal transcription, whereas the C-terminal domain is involved in interaction with transcriptional regulators and with upstream promoter elements.</text>
</comment>
<comment type="similarity">
    <text evidence="1">Belongs to the RNA polymerase alpha chain family.</text>
</comment>
<gene>
    <name evidence="1" type="primary">rpoA</name>
    <name type="ordered locus">MGAS10270_Spy0073</name>
</gene>
<feature type="chain" id="PRO_0000264555" description="DNA-directed RNA polymerase subunit alpha">
    <location>
        <begin position="1"/>
        <end position="312"/>
    </location>
</feature>
<feature type="region of interest" description="Alpha N-terminal domain (alpha-NTD)" evidence="1">
    <location>
        <begin position="1"/>
        <end position="226"/>
    </location>
</feature>
<feature type="region of interest" description="Alpha C-terminal domain (alpha-CTD)" evidence="1">
    <location>
        <begin position="242"/>
        <end position="312"/>
    </location>
</feature>
<proteinExistence type="inferred from homology"/>
<name>RPOA_STRPD</name>
<reference key="1">
    <citation type="journal article" date="2006" name="Proc. Natl. Acad. Sci. U.S.A.">
        <title>Molecular genetic anatomy of inter- and intraserotype variation in the human bacterial pathogen group A Streptococcus.</title>
        <authorList>
            <person name="Beres S.B."/>
            <person name="Richter E.W."/>
            <person name="Nagiec M.J."/>
            <person name="Sumby P."/>
            <person name="Porcella S.F."/>
            <person name="DeLeo F.R."/>
            <person name="Musser J.M."/>
        </authorList>
    </citation>
    <scope>NUCLEOTIDE SEQUENCE [LARGE SCALE GENOMIC DNA]</scope>
    <source>
        <strain>MGAS10270</strain>
    </source>
</reference>
<evidence type="ECO:0000255" key="1">
    <source>
        <dbReference type="HAMAP-Rule" id="MF_00059"/>
    </source>
</evidence>
<sequence>MIEFEKPIITKIDENKDYGRFVIEPLERGYGTTLGNSLRRVLLSSLPGAAVTSIKIDGVLHEFDTIPGVREDVMQIILNVKGLAVKSYVEDEKIIELEVEGPAEVTAGDILTDSDIELVNPDHYLFTIAEGHSLRATMTVAKKRGYVPAEGNKKDDAPVGTLAVDSIYTPVKKVNYQVEPARVGSNDGFDKLTIEIMTNGTIIPEDALGLSARVLIEHLNLFTDLTEVAKATEVMKETEKVNDEKVLDRTIEELDLSVRSYNCLKRAGINTVFDLTEKSEPEMMKVRNLGRKSLEEVKVKLADLGLGLKNDK</sequence>
<dbReference type="EC" id="2.7.7.6" evidence="1"/>
<dbReference type="EMBL" id="CP000260">
    <property type="protein sequence ID" value="ABF33138.1"/>
    <property type="molecule type" value="Genomic_DNA"/>
</dbReference>
<dbReference type="RefSeq" id="WP_002986607.1">
    <property type="nucleotide sequence ID" value="NZ_CVUH01000001.1"/>
</dbReference>
<dbReference type="SMR" id="Q1JJ35"/>
<dbReference type="KEGG" id="sph:MGAS10270_Spy0073"/>
<dbReference type="HOGENOM" id="CLU_053084_0_1_9"/>
<dbReference type="Proteomes" id="UP000002436">
    <property type="component" value="Chromosome"/>
</dbReference>
<dbReference type="GO" id="GO:0005737">
    <property type="term" value="C:cytoplasm"/>
    <property type="evidence" value="ECO:0007669"/>
    <property type="project" value="UniProtKB-ARBA"/>
</dbReference>
<dbReference type="GO" id="GO:0000428">
    <property type="term" value="C:DNA-directed RNA polymerase complex"/>
    <property type="evidence" value="ECO:0007669"/>
    <property type="project" value="UniProtKB-KW"/>
</dbReference>
<dbReference type="GO" id="GO:0003677">
    <property type="term" value="F:DNA binding"/>
    <property type="evidence" value="ECO:0007669"/>
    <property type="project" value="UniProtKB-UniRule"/>
</dbReference>
<dbReference type="GO" id="GO:0003899">
    <property type="term" value="F:DNA-directed RNA polymerase activity"/>
    <property type="evidence" value="ECO:0007669"/>
    <property type="project" value="UniProtKB-UniRule"/>
</dbReference>
<dbReference type="GO" id="GO:0046983">
    <property type="term" value="F:protein dimerization activity"/>
    <property type="evidence" value="ECO:0007669"/>
    <property type="project" value="InterPro"/>
</dbReference>
<dbReference type="GO" id="GO:0006351">
    <property type="term" value="P:DNA-templated transcription"/>
    <property type="evidence" value="ECO:0007669"/>
    <property type="project" value="UniProtKB-UniRule"/>
</dbReference>
<dbReference type="CDD" id="cd06928">
    <property type="entry name" value="RNAP_alpha_NTD"/>
    <property type="match status" value="1"/>
</dbReference>
<dbReference type="FunFam" id="1.10.150.20:FF:000001">
    <property type="entry name" value="DNA-directed RNA polymerase subunit alpha"/>
    <property type="match status" value="1"/>
</dbReference>
<dbReference type="FunFam" id="2.170.120.12:FF:000001">
    <property type="entry name" value="DNA-directed RNA polymerase subunit alpha"/>
    <property type="match status" value="1"/>
</dbReference>
<dbReference type="Gene3D" id="1.10.150.20">
    <property type="entry name" value="5' to 3' exonuclease, C-terminal subdomain"/>
    <property type="match status" value="1"/>
</dbReference>
<dbReference type="Gene3D" id="2.170.120.12">
    <property type="entry name" value="DNA-directed RNA polymerase, insert domain"/>
    <property type="match status" value="1"/>
</dbReference>
<dbReference type="Gene3D" id="3.30.1360.10">
    <property type="entry name" value="RNA polymerase, RBP11-like subunit"/>
    <property type="match status" value="1"/>
</dbReference>
<dbReference type="HAMAP" id="MF_00059">
    <property type="entry name" value="RNApol_bact_RpoA"/>
    <property type="match status" value="1"/>
</dbReference>
<dbReference type="InterPro" id="IPR011262">
    <property type="entry name" value="DNA-dir_RNA_pol_insert"/>
</dbReference>
<dbReference type="InterPro" id="IPR011263">
    <property type="entry name" value="DNA-dir_RNA_pol_RpoA/D/Rpb3"/>
</dbReference>
<dbReference type="InterPro" id="IPR011773">
    <property type="entry name" value="DNA-dir_RpoA"/>
</dbReference>
<dbReference type="InterPro" id="IPR036603">
    <property type="entry name" value="RBP11-like"/>
</dbReference>
<dbReference type="InterPro" id="IPR011260">
    <property type="entry name" value="RNAP_asu_C"/>
</dbReference>
<dbReference type="InterPro" id="IPR036643">
    <property type="entry name" value="RNApol_insert_sf"/>
</dbReference>
<dbReference type="NCBIfam" id="NF003513">
    <property type="entry name" value="PRK05182.1-2"/>
    <property type="match status" value="1"/>
</dbReference>
<dbReference type="NCBIfam" id="NF003515">
    <property type="entry name" value="PRK05182.2-1"/>
    <property type="match status" value="1"/>
</dbReference>
<dbReference type="NCBIfam" id="NF003518">
    <property type="entry name" value="PRK05182.2-4"/>
    <property type="match status" value="1"/>
</dbReference>
<dbReference type="NCBIfam" id="NF003519">
    <property type="entry name" value="PRK05182.2-5"/>
    <property type="match status" value="1"/>
</dbReference>
<dbReference type="NCBIfam" id="TIGR02027">
    <property type="entry name" value="rpoA"/>
    <property type="match status" value="1"/>
</dbReference>
<dbReference type="Pfam" id="PF01000">
    <property type="entry name" value="RNA_pol_A_bac"/>
    <property type="match status" value="1"/>
</dbReference>
<dbReference type="Pfam" id="PF03118">
    <property type="entry name" value="RNA_pol_A_CTD"/>
    <property type="match status" value="1"/>
</dbReference>
<dbReference type="Pfam" id="PF01193">
    <property type="entry name" value="RNA_pol_L"/>
    <property type="match status" value="1"/>
</dbReference>
<dbReference type="SMART" id="SM00662">
    <property type="entry name" value="RPOLD"/>
    <property type="match status" value="1"/>
</dbReference>
<dbReference type="SUPFAM" id="SSF47789">
    <property type="entry name" value="C-terminal domain of RNA polymerase alpha subunit"/>
    <property type="match status" value="1"/>
</dbReference>
<dbReference type="SUPFAM" id="SSF56553">
    <property type="entry name" value="Insert subdomain of RNA polymerase alpha subunit"/>
    <property type="match status" value="1"/>
</dbReference>
<dbReference type="SUPFAM" id="SSF55257">
    <property type="entry name" value="RBP11-like subunits of RNA polymerase"/>
    <property type="match status" value="1"/>
</dbReference>
<keyword id="KW-0240">DNA-directed RNA polymerase</keyword>
<keyword id="KW-0548">Nucleotidyltransferase</keyword>
<keyword id="KW-0804">Transcription</keyword>
<keyword id="KW-0808">Transferase</keyword>
<organism>
    <name type="scientific">Streptococcus pyogenes serotype M2 (strain MGAS10270)</name>
    <dbReference type="NCBI Taxonomy" id="370552"/>
    <lineage>
        <taxon>Bacteria</taxon>
        <taxon>Bacillati</taxon>
        <taxon>Bacillota</taxon>
        <taxon>Bacilli</taxon>
        <taxon>Lactobacillales</taxon>
        <taxon>Streptococcaceae</taxon>
        <taxon>Streptococcus</taxon>
    </lineage>
</organism>
<protein>
    <recommendedName>
        <fullName evidence="1">DNA-directed RNA polymerase subunit alpha</fullName>
        <shortName evidence="1">RNAP subunit alpha</shortName>
        <ecNumber evidence="1">2.7.7.6</ecNumber>
    </recommendedName>
    <alternativeName>
        <fullName evidence="1">RNA polymerase subunit alpha</fullName>
    </alternativeName>
    <alternativeName>
        <fullName evidence="1">Transcriptase subunit alpha</fullName>
    </alternativeName>
</protein>
<accession>Q1JJ35</accession>